<accession>Q748G1</accession>
<gene>
    <name evidence="1" type="primary">csrA</name>
    <name type="ordered locus">GSU3041</name>
</gene>
<feature type="chain" id="PRO_0000177066" description="Translational regulator CsrA">
    <location>
        <begin position="1"/>
        <end position="79"/>
    </location>
</feature>
<protein>
    <recommendedName>
        <fullName evidence="1">Translational regulator CsrA</fullName>
    </recommendedName>
</protein>
<sequence>MLVLTRKMGEVVTIGDSIRIKVVEMKGNQVRLGIEAPNDMRIYREEIYIKVQRENQIAASWSLADLEKAVTCLGADGKE</sequence>
<dbReference type="EMBL" id="AE017180">
    <property type="protein sequence ID" value="AAR36433.1"/>
    <property type="molecule type" value="Genomic_DNA"/>
</dbReference>
<dbReference type="RefSeq" id="NP_954083.1">
    <property type="nucleotide sequence ID" value="NC_002939.5"/>
</dbReference>
<dbReference type="RefSeq" id="WP_010943667.1">
    <property type="nucleotide sequence ID" value="NC_002939.5"/>
</dbReference>
<dbReference type="SMR" id="Q748G1"/>
<dbReference type="FunCoup" id="Q748G1">
    <property type="interactions" value="270"/>
</dbReference>
<dbReference type="STRING" id="243231.GSU3041"/>
<dbReference type="EnsemblBacteria" id="AAR36433">
    <property type="protein sequence ID" value="AAR36433"/>
    <property type="gene ID" value="GSU3041"/>
</dbReference>
<dbReference type="KEGG" id="gsu:GSU3041"/>
<dbReference type="PATRIC" id="fig|243231.5.peg.3065"/>
<dbReference type="eggNOG" id="COG1551">
    <property type="taxonomic scope" value="Bacteria"/>
</dbReference>
<dbReference type="HOGENOM" id="CLU_164837_0_2_7"/>
<dbReference type="InParanoid" id="Q748G1"/>
<dbReference type="OrthoDB" id="9809061at2"/>
<dbReference type="Proteomes" id="UP000000577">
    <property type="component" value="Chromosome"/>
</dbReference>
<dbReference type="GO" id="GO:0005829">
    <property type="term" value="C:cytosol"/>
    <property type="evidence" value="ECO:0000318"/>
    <property type="project" value="GO_Central"/>
</dbReference>
<dbReference type="GO" id="GO:0048027">
    <property type="term" value="F:mRNA 5'-UTR binding"/>
    <property type="evidence" value="ECO:0007669"/>
    <property type="project" value="UniProtKB-UniRule"/>
</dbReference>
<dbReference type="GO" id="GO:0044781">
    <property type="term" value="P:bacterial-type flagellum organization"/>
    <property type="evidence" value="ECO:0007669"/>
    <property type="project" value="UniProtKB-KW"/>
</dbReference>
<dbReference type="GO" id="GO:0006402">
    <property type="term" value="P:mRNA catabolic process"/>
    <property type="evidence" value="ECO:0007669"/>
    <property type="project" value="InterPro"/>
</dbReference>
<dbReference type="GO" id="GO:0045947">
    <property type="term" value="P:negative regulation of translational initiation"/>
    <property type="evidence" value="ECO:0007669"/>
    <property type="project" value="UniProtKB-UniRule"/>
</dbReference>
<dbReference type="GO" id="GO:1902208">
    <property type="term" value="P:regulation of bacterial-type flagellum assembly"/>
    <property type="evidence" value="ECO:0007669"/>
    <property type="project" value="UniProtKB-UniRule"/>
</dbReference>
<dbReference type="GO" id="GO:0006109">
    <property type="term" value="P:regulation of carbohydrate metabolic process"/>
    <property type="evidence" value="ECO:0007669"/>
    <property type="project" value="InterPro"/>
</dbReference>
<dbReference type="FunFam" id="2.60.40.4380:FF:000002">
    <property type="entry name" value="Translational regulator CsrA"/>
    <property type="match status" value="1"/>
</dbReference>
<dbReference type="Gene3D" id="2.60.40.4380">
    <property type="entry name" value="Translational regulator CsrA"/>
    <property type="match status" value="1"/>
</dbReference>
<dbReference type="HAMAP" id="MF_00167">
    <property type="entry name" value="CsrA"/>
    <property type="match status" value="1"/>
</dbReference>
<dbReference type="InterPro" id="IPR003751">
    <property type="entry name" value="CsrA"/>
</dbReference>
<dbReference type="InterPro" id="IPR036107">
    <property type="entry name" value="CsrA_sf"/>
</dbReference>
<dbReference type="NCBIfam" id="TIGR00202">
    <property type="entry name" value="csrA"/>
    <property type="match status" value="1"/>
</dbReference>
<dbReference type="NCBIfam" id="NF002469">
    <property type="entry name" value="PRK01712.1"/>
    <property type="match status" value="1"/>
</dbReference>
<dbReference type="PANTHER" id="PTHR34984">
    <property type="entry name" value="CARBON STORAGE REGULATOR"/>
    <property type="match status" value="1"/>
</dbReference>
<dbReference type="PANTHER" id="PTHR34984:SF1">
    <property type="entry name" value="CARBON STORAGE REGULATOR"/>
    <property type="match status" value="1"/>
</dbReference>
<dbReference type="Pfam" id="PF02599">
    <property type="entry name" value="CsrA"/>
    <property type="match status" value="1"/>
</dbReference>
<dbReference type="SUPFAM" id="SSF117130">
    <property type="entry name" value="CsrA-like"/>
    <property type="match status" value="1"/>
</dbReference>
<comment type="function">
    <text evidence="1">A translational regulator that binds mRNA to regulate translation initiation and/or mRNA stability. Usually binds in the 5'-UTR at or near the Shine-Dalgarno sequence preventing ribosome-binding, thus repressing translation. Its main target seems to be the major flagellin gene, while its function is anatagonized by FliW.</text>
</comment>
<comment type="subunit">
    <text evidence="1">Homodimer; the beta-strands of each monomer intercalate to form a hydrophobic core, while the alpha-helices form wings that extend away from the core.</text>
</comment>
<comment type="subcellular location">
    <subcellularLocation>
        <location evidence="1">Cytoplasm</location>
    </subcellularLocation>
</comment>
<comment type="similarity">
    <text evidence="1">Belongs to the CsrA/RsmA family.</text>
</comment>
<name>CSRA_GEOSL</name>
<organism>
    <name type="scientific">Geobacter sulfurreducens (strain ATCC 51573 / DSM 12127 / PCA)</name>
    <dbReference type="NCBI Taxonomy" id="243231"/>
    <lineage>
        <taxon>Bacteria</taxon>
        <taxon>Pseudomonadati</taxon>
        <taxon>Thermodesulfobacteriota</taxon>
        <taxon>Desulfuromonadia</taxon>
        <taxon>Geobacterales</taxon>
        <taxon>Geobacteraceae</taxon>
        <taxon>Geobacter</taxon>
    </lineage>
</organism>
<keyword id="KW-1005">Bacterial flagellum biogenesis</keyword>
<keyword id="KW-0963">Cytoplasm</keyword>
<keyword id="KW-1185">Reference proteome</keyword>
<keyword id="KW-0678">Repressor</keyword>
<keyword id="KW-0694">RNA-binding</keyword>
<keyword id="KW-0810">Translation regulation</keyword>
<reference key="1">
    <citation type="journal article" date="2003" name="Science">
        <title>Genome of Geobacter sulfurreducens: metal reduction in subsurface environments.</title>
        <authorList>
            <person name="Methe B.A."/>
            <person name="Nelson K.E."/>
            <person name="Eisen J.A."/>
            <person name="Paulsen I.T."/>
            <person name="Nelson W.C."/>
            <person name="Heidelberg J.F."/>
            <person name="Wu D."/>
            <person name="Wu M."/>
            <person name="Ward N.L."/>
            <person name="Beanan M.J."/>
            <person name="Dodson R.J."/>
            <person name="Madupu R."/>
            <person name="Brinkac L.M."/>
            <person name="Daugherty S.C."/>
            <person name="DeBoy R.T."/>
            <person name="Durkin A.S."/>
            <person name="Gwinn M.L."/>
            <person name="Kolonay J.F."/>
            <person name="Sullivan S.A."/>
            <person name="Haft D.H."/>
            <person name="Selengut J."/>
            <person name="Davidsen T.M."/>
            <person name="Zafar N."/>
            <person name="White O."/>
            <person name="Tran B."/>
            <person name="Romero C."/>
            <person name="Forberger H.A."/>
            <person name="Weidman J.F."/>
            <person name="Khouri H.M."/>
            <person name="Feldblyum T.V."/>
            <person name="Utterback T.R."/>
            <person name="Van Aken S.E."/>
            <person name="Lovley D.R."/>
            <person name="Fraser C.M."/>
        </authorList>
    </citation>
    <scope>NUCLEOTIDE SEQUENCE [LARGE SCALE GENOMIC DNA]</scope>
    <source>
        <strain>ATCC 51573 / DSM 12127 / PCA</strain>
    </source>
</reference>
<evidence type="ECO:0000255" key="1">
    <source>
        <dbReference type="HAMAP-Rule" id="MF_00167"/>
    </source>
</evidence>
<proteinExistence type="inferred from homology"/>